<gene>
    <name type="primary">RPS6</name>
</gene>
<comment type="PTM">
    <text evidence="1">Phosphorylated.</text>
</comment>
<comment type="similarity">
    <text evidence="3">Belongs to the eukaryotic ribosomal protein eS6 family.</text>
</comment>
<feature type="chain" id="PRO_0000137338" description="Small ribosomal subunit protein eS6">
    <location>
        <begin position="1"/>
        <end position="235"/>
    </location>
</feature>
<feature type="modified residue" description="Phosphoserine" evidence="2">
    <location>
        <position position="229"/>
    </location>
</feature>
<feature type="modified residue" description="Phosphoserine" evidence="2">
    <location>
        <position position="230"/>
    </location>
</feature>
<reference key="1">
    <citation type="journal article" date="1992" name="Yeast">
        <title>Structural and putative regulatory sequences of Kluyveromyces ribosomal protein genes.</title>
        <authorList>
            <person name="Bergkamp-Steffens G.K."/>
            <person name="Hoekstra R."/>
            <person name="Planta R.J."/>
        </authorList>
    </citation>
    <scope>NUCLEOTIDE SEQUENCE [GENOMIC DNA]</scope>
</reference>
<name>RS6_KLUMA</name>
<proteinExistence type="inferred from homology"/>
<keyword id="KW-0597">Phosphoprotein</keyword>
<keyword id="KW-0687">Ribonucleoprotein</keyword>
<keyword id="KW-0689">Ribosomal protein</keyword>
<organism>
    <name type="scientific">Kluyveromyces marxianus</name>
    <name type="common">Yeast</name>
    <name type="synonym">Candida kefyr</name>
    <dbReference type="NCBI Taxonomy" id="4911"/>
    <lineage>
        <taxon>Eukaryota</taxon>
        <taxon>Fungi</taxon>
        <taxon>Dikarya</taxon>
        <taxon>Ascomycota</taxon>
        <taxon>Saccharomycotina</taxon>
        <taxon>Saccharomycetes</taxon>
        <taxon>Saccharomycetales</taxon>
        <taxon>Saccharomycetaceae</taxon>
        <taxon>Kluyveromyces</taxon>
    </lineage>
</organism>
<sequence length="235" mass="26702">MKLNISYPINGTQKCVEIDDEHRVRVFYDKRIGQEVDGEAVGDEFKGYVFKIAGGNDKQGFPMKQGVLLPTRVKLLMAKGTSCYRPRRNGERKRKSVRGAIVGPDLAVLALVIVKKGDQEIEGVTNETVPKRLGPKRANNIRKFFGLTKEDDVRDYVIRREVTKGEKTYTKAPKIQRLVTPQRLQRKRQQKALKIKNAQAQREAAAEYAQLLAKRLAERKAEVRKRRASSLKAAE</sequence>
<dbReference type="EMBL" id="S53430">
    <property type="protein sequence ID" value="AAB24898.1"/>
    <property type="molecule type" value="Genomic_DNA"/>
</dbReference>
<dbReference type="PIR" id="S30001">
    <property type="entry name" value="S30001"/>
</dbReference>
<dbReference type="SMR" id="P41798"/>
<dbReference type="VEuPathDB" id="FungiDB:KLMA_10786"/>
<dbReference type="GO" id="GO:1990904">
    <property type="term" value="C:ribonucleoprotein complex"/>
    <property type="evidence" value="ECO:0007669"/>
    <property type="project" value="UniProtKB-KW"/>
</dbReference>
<dbReference type="GO" id="GO:0005840">
    <property type="term" value="C:ribosome"/>
    <property type="evidence" value="ECO:0007669"/>
    <property type="project" value="UniProtKB-KW"/>
</dbReference>
<dbReference type="GO" id="GO:0003735">
    <property type="term" value="F:structural constituent of ribosome"/>
    <property type="evidence" value="ECO:0007669"/>
    <property type="project" value="InterPro"/>
</dbReference>
<dbReference type="GO" id="GO:0006412">
    <property type="term" value="P:translation"/>
    <property type="evidence" value="ECO:0007669"/>
    <property type="project" value="InterPro"/>
</dbReference>
<dbReference type="Gene3D" id="1.20.5.2650">
    <property type="match status" value="1"/>
</dbReference>
<dbReference type="InterPro" id="IPR001377">
    <property type="entry name" value="Ribosomal_eS6"/>
</dbReference>
<dbReference type="InterPro" id="IPR014401">
    <property type="entry name" value="Ribosomal_eS6-like"/>
</dbReference>
<dbReference type="InterPro" id="IPR018282">
    <property type="entry name" value="Ribosomal_eS6_CS"/>
</dbReference>
<dbReference type="PANTHER" id="PTHR11502">
    <property type="entry name" value="40S RIBOSOMAL PROTEIN S6"/>
    <property type="match status" value="1"/>
</dbReference>
<dbReference type="Pfam" id="PF01092">
    <property type="entry name" value="Ribosomal_S6e"/>
    <property type="match status" value="1"/>
</dbReference>
<dbReference type="PIRSF" id="PIRSF002129">
    <property type="entry name" value="Ribosom_S6_euk"/>
    <property type="match status" value="1"/>
</dbReference>
<dbReference type="SMART" id="SM01405">
    <property type="entry name" value="Ribosomal_S6e"/>
    <property type="match status" value="1"/>
</dbReference>
<dbReference type="PROSITE" id="PS00578">
    <property type="entry name" value="RIBOSOMAL_S6E"/>
    <property type="match status" value="1"/>
</dbReference>
<accession>P41798</accession>
<evidence type="ECO:0000250" key="1"/>
<evidence type="ECO:0000255" key="2"/>
<evidence type="ECO:0000305" key="3"/>
<protein>
    <recommendedName>
        <fullName evidence="3">Small ribosomal subunit protein eS6</fullName>
    </recommendedName>
    <alternativeName>
        <fullName>40S ribosomal protein S6</fullName>
    </alternativeName>
    <alternativeName>
        <fullName>Ribosomal protein S10</fullName>
    </alternativeName>
</protein>